<feature type="chain" id="PRO_0000071394" description="5'-3' exoribonuclease 1">
    <location>
        <begin position="1"/>
        <end position="1328"/>
    </location>
</feature>
<feature type="region of interest" description="Disordered" evidence="3">
    <location>
        <begin position="1211"/>
        <end position="1328"/>
    </location>
</feature>
<feature type="compositionally biased region" description="Polar residues" evidence="3">
    <location>
        <begin position="1217"/>
        <end position="1231"/>
    </location>
</feature>
<feature type="compositionally biased region" description="Basic residues" evidence="3">
    <location>
        <begin position="1275"/>
        <end position="1286"/>
    </location>
</feature>
<comment type="function">
    <text evidence="2 4 6">Multifunctional protein that exhibits several independent functions at different levels of the cellular processes (PubMed:1637812, PubMed:8188690). 5'-3' exonuclease component of the nonsense-mediated mRNA decay (NMD) which is a highly conserved mRNA degradation pathway, an RNA surveillance system whose role is to identify and rid cells of mRNA with premature termination codons and thus prevents accumulation of potentially harmful truncated proteins (By similarity). Involved in the degradation of several hypomodified mature tRNA species and participates in the 5'-processing or the degradation of the snoRNA precursors and rRNA processing (By similarity).</text>
</comment>
<comment type="cofactor">
    <cofactor evidence="4">
        <name>Mg(2+)</name>
        <dbReference type="ChEBI" id="CHEBI:18420"/>
    </cofactor>
</comment>
<comment type="activity regulation">
    <text evidence="7">Strand exchange activity is enhanced by fatty acid synthase (stimulatory factor P190/210).</text>
</comment>
<comment type="subunit">
    <text>Monomer.</text>
</comment>
<comment type="subcellular location">
    <subcellularLocation>
        <location evidence="5">Cytoplasm</location>
    </subcellularLocation>
    <subcellularLocation>
        <location evidence="1">Cytoplasm</location>
        <location evidence="1">Perinuclear region</location>
    </subcellularLocation>
    <subcellularLocation>
        <location evidence="1">Cytoplasm</location>
        <location evidence="1">P-body</location>
    </subcellularLocation>
</comment>
<comment type="similarity">
    <text evidence="8">Belongs to the 5'-3' exonuclease family.</text>
</comment>
<evidence type="ECO:0000250" key="1"/>
<evidence type="ECO:0000250" key="2">
    <source>
        <dbReference type="UniProtKB" id="P22147"/>
    </source>
</evidence>
<evidence type="ECO:0000256" key="3">
    <source>
        <dbReference type="SAM" id="MobiDB-lite"/>
    </source>
</evidence>
<evidence type="ECO:0000269" key="4">
    <source>
    </source>
</evidence>
<evidence type="ECO:0000269" key="5">
    <source>
    </source>
</evidence>
<evidence type="ECO:0000269" key="6">
    <source>
    </source>
</evidence>
<evidence type="ECO:0000269" key="7">
    <source>
    </source>
</evidence>
<evidence type="ECO:0000305" key="8"/>
<sequence>MGIPKFFRWMSERYPLCSQLIENDRIPEFDNLYLDMNGILHNCTHKNDDHSSPPLPEEEMYIAIFNYIEHLFEKIKPKKLLYMAVDGCAPRAKMNQQRSRRFRTAKDAHDARLKAERNGEDFPEEQFDSNCITPGTTFMERVSRQLYYFIHKKVTNDSQWQNIEVIFSGHDCPGEGEHKIMEYIRTQKAQPSYNPNTRHCLYGLDADLIMLGLLSHDPHFCLLREEVTFGPASRNRSKELAHQKFYLLHLSLLREYLEFEFQECRSTFTFKYDLEKILDDFILLAFFVGNDFLPHLPGLHINEGALALMFSIYKKVMPSAGGYINEKGVINMARLELILLELENFEKEIFKAEVSETKNNGNSDKPSFDFLKYITESTNDIKAMTGEQKNYFLQIKKFLSSREPFIDFSANISSVDQRFLRRLCNDLHLSFSKIIKVDGTHLLRITFRDLEFNDEDEDEIEQDEIERVLQKYDNIPLLNEEQALKEKNVEKDFIQWKDDYYRSKVGFSYYDEEALKAMAERYVEGLQWVLFYYYRGCQSWGWYYNYHFAPKISDVLKGLDVKIDFKMGTPFRPFEQLMAVLPARSQALVPPCFRDLMVNSESPIIDFYPENFALDQNGKTASWEAVVIIPFIDETRLIDALASKDKFLTEEERKRNSFNAPTVFSLAEDYTSFYPSSLPSLFPDLVTRCIQKPYSLPSMEGKEYLVGLCPGVFLGAFGMVGFPSFHTLKHKAELVYHGINVFGNESRNPSVIVNVEDVKSALTSEQIAMQYVGKRIFVDWPYLREAYVESAMDESYMYLASNSTIEKRDLAEIEKSQWGRKCSHKIREYSKRFGVLFGDISLLLQVRPIKGLEYTREGALVKIFNESVLEDYPAQLVVEKIAIDDPRFTEREAPPVEVEYPPGTKAFHLGEYNYGRPAQITGCKDNKLIIWLSTAPGLDAQWGRVLVNDSKSKEKYYPSYIVAKLLNIHPLLLSKITSSFLISNGTKRENIGLNLKFDARNQKVLGFSRKSTKGWEFSNKTVALVKEYINTFPQLFNILTTHATKDNLTVKDCFPKDDTQQLAAVKHWIKEKGINSLTRVSLDEDALDSDIIKLIEEKASTIDSTYQVPKKVFGVPRYALLKPSQTRGILHSQEFALGDRVVYVQDSGKVPIAAYGTVVGIMLHHLDVVFDLPFMSGTTLDGRCSPYHGMQVEVSMVLNVTNPQFVVNTRAGKNRKTNVSANNVSQGTDSRLVTKPTSTFPSPPSPPSSSVWNKREHHPKPFSLHQVPPPESLIHKSKSKFSKGNHHSTNGTQSIRGRGGKRGKPLRSKELNRKHDHIVQPMGKLQIN</sequence>
<organism>
    <name type="scientific">Schizosaccharomyces pombe (strain 972 / ATCC 24843)</name>
    <name type="common">Fission yeast</name>
    <dbReference type="NCBI Taxonomy" id="284812"/>
    <lineage>
        <taxon>Eukaryota</taxon>
        <taxon>Fungi</taxon>
        <taxon>Dikarya</taxon>
        <taxon>Ascomycota</taxon>
        <taxon>Taphrinomycotina</taxon>
        <taxon>Schizosaccharomycetes</taxon>
        <taxon>Schizosaccharomycetales</taxon>
        <taxon>Schizosaccharomycetaceae</taxon>
        <taxon>Schizosaccharomyces</taxon>
    </lineage>
</organism>
<proteinExistence type="evidence at protein level"/>
<keyword id="KW-0963">Cytoplasm</keyword>
<keyword id="KW-0903">Direct protein sequencing</keyword>
<keyword id="KW-0269">Exonuclease</keyword>
<keyword id="KW-0378">Hydrolase</keyword>
<keyword id="KW-0460">Magnesium</keyword>
<keyword id="KW-0866">Nonsense-mediated mRNA decay</keyword>
<keyword id="KW-0540">Nuclease</keyword>
<keyword id="KW-1185">Reference proteome</keyword>
<keyword id="KW-0694">RNA-binding</keyword>
<keyword id="KW-0698">rRNA processing</keyword>
<dbReference type="EC" id="3.1.13.-"/>
<dbReference type="EMBL" id="L35232">
    <property type="protein sequence ID" value="AAB42181.1"/>
    <property type="molecule type" value="Genomic_DNA"/>
</dbReference>
<dbReference type="EMBL" id="CU329670">
    <property type="protein sequence ID" value="CAB11514.1"/>
    <property type="molecule type" value="Genomic_DNA"/>
</dbReference>
<dbReference type="PIR" id="S78457">
    <property type="entry name" value="S78457"/>
</dbReference>
<dbReference type="RefSeq" id="NP_593482.1">
    <property type="nucleotide sequence ID" value="NM_001018915.2"/>
</dbReference>
<dbReference type="SMR" id="P40383"/>
<dbReference type="BioGRID" id="278679">
    <property type="interactions" value="19"/>
</dbReference>
<dbReference type="FunCoup" id="P40383">
    <property type="interactions" value="509"/>
</dbReference>
<dbReference type="STRING" id="284812.P40383"/>
<dbReference type="iPTMnet" id="P40383"/>
<dbReference type="PaxDb" id="4896-SPAC17A5.14.1"/>
<dbReference type="EnsemblFungi" id="SPAC17A5.14.1">
    <property type="protein sequence ID" value="SPAC17A5.14.1:pep"/>
    <property type="gene ID" value="SPAC17A5.14"/>
</dbReference>
<dbReference type="GeneID" id="2542204"/>
<dbReference type="KEGG" id="spo:2542204"/>
<dbReference type="PomBase" id="SPAC17A5.14">
    <property type="gene designation" value="exo2"/>
</dbReference>
<dbReference type="VEuPathDB" id="FungiDB:SPAC17A5.14"/>
<dbReference type="eggNOG" id="KOG2045">
    <property type="taxonomic scope" value="Eukaryota"/>
</dbReference>
<dbReference type="HOGENOM" id="CLU_001581_1_2_1"/>
<dbReference type="InParanoid" id="P40383"/>
<dbReference type="OMA" id="VASWPWF"/>
<dbReference type="PhylomeDB" id="P40383"/>
<dbReference type="CD-CODE" id="0808F6DD">
    <property type="entry name" value="P-body"/>
</dbReference>
<dbReference type="PRO" id="PR:P40383"/>
<dbReference type="Proteomes" id="UP000002485">
    <property type="component" value="Chromosome I"/>
</dbReference>
<dbReference type="GO" id="GO:0005737">
    <property type="term" value="C:cytoplasm"/>
    <property type="evidence" value="ECO:0007005"/>
    <property type="project" value="PomBase"/>
</dbReference>
<dbReference type="GO" id="GO:0010494">
    <property type="term" value="C:cytoplasmic stress granule"/>
    <property type="evidence" value="ECO:0000314"/>
    <property type="project" value="PomBase"/>
</dbReference>
<dbReference type="GO" id="GO:0005829">
    <property type="term" value="C:cytosol"/>
    <property type="evidence" value="ECO:0007005"/>
    <property type="project" value="PomBase"/>
</dbReference>
<dbReference type="GO" id="GO:0005634">
    <property type="term" value="C:nucleus"/>
    <property type="evidence" value="ECO:0000318"/>
    <property type="project" value="GO_Central"/>
</dbReference>
<dbReference type="GO" id="GO:0000932">
    <property type="term" value="C:P-body"/>
    <property type="evidence" value="ECO:0000314"/>
    <property type="project" value="PomBase"/>
</dbReference>
<dbReference type="GO" id="GO:0048471">
    <property type="term" value="C:perinuclear region of cytoplasm"/>
    <property type="evidence" value="ECO:0007669"/>
    <property type="project" value="UniProtKB-SubCell"/>
</dbReference>
<dbReference type="GO" id="GO:0004534">
    <property type="term" value="F:5'-3' RNA exonuclease activity"/>
    <property type="evidence" value="ECO:0000314"/>
    <property type="project" value="PomBase"/>
</dbReference>
<dbReference type="GO" id="GO:0000287">
    <property type="term" value="F:magnesium ion binding"/>
    <property type="evidence" value="ECO:0000314"/>
    <property type="project" value="PomBase"/>
</dbReference>
<dbReference type="GO" id="GO:0003723">
    <property type="term" value="F:RNA binding"/>
    <property type="evidence" value="ECO:0000318"/>
    <property type="project" value="GO_Central"/>
</dbReference>
<dbReference type="GO" id="GO:0004540">
    <property type="term" value="F:RNA nuclease activity"/>
    <property type="evidence" value="ECO:0000314"/>
    <property type="project" value="PomBase"/>
</dbReference>
<dbReference type="GO" id="GO:0000956">
    <property type="term" value="P:nuclear-transcribed mRNA catabolic process"/>
    <property type="evidence" value="ECO:0000318"/>
    <property type="project" value="GO_Central"/>
</dbReference>
<dbReference type="GO" id="GO:0000184">
    <property type="term" value="P:nuclear-transcribed mRNA catabolic process, nonsense-mediated decay"/>
    <property type="evidence" value="ECO:0000266"/>
    <property type="project" value="PomBase"/>
</dbReference>
<dbReference type="GO" id="GO:0180037">
    <property type="term" value="P:rapid tRNA decay"/>
    <property type="evidence" value="ECO:0000304"/>
    <property type="project" value="PomBase"/>
</dbReference>
<dbReference type="GO" id="GO:0016075">
    <property type="term" value="P:rRNA catabolic process"/>
    <property type="evidence" value="ECO:0000318"/>
    <property type="project" value="GO_Central"/>
</dbReference>
<dbReference type="GO" id="GO:0006364">
    <property type="term" value="P:rRNA processing"/>
    <property type="evidence" value="ECO:0007669"/>
    <property type="project" value="UniProtKB-KW"/>
</dbReference>
<dbReference type="CDD" id="cd18673">
    <property type="entry name" value="PIN_XRN1-2-like"/>
    <property type="match status" value="1"/>
</dbReference>
<dbReference type="FunFam" id="1.25.40.1050:FF:000001">
    <property type="entry name" value="5'-3' exoribonuclease 1"/>
    <property type="match status" value="1"/>
</dbReference>
<dbReference type="FunFam" id="3.40.50.12390:FF:000002">
    <property type="entry name" value="5'-3' exoribonuclease 1"/>
    <property type="match status" value="1"/>
</dbReference>
<dbReference type="Gene3D" id="1.25.40.1050">
    <property type="match status" value="1"/>
</dbReference>
<dbReference type="Gene3D" id="2.170.260.40">
    <property type="match status" value="1"/>
</dbReference>
<dbReference type="Gene3D" id="2.30.30.30">
    <property type="match status" value="1"/>
</dbReference>
<dbReference type="Gene3D" id="2.30.30.750">
    <property type="match status" value="1"/>
</dbReference>
<dbReference type="Gene3D" id="3.40.50.12390">
    <property type="match status" value="2"/>
</dbReference>
<dbReference type="InterPro" id="IPR027073">
    <property type="entry name" value="5_3_exoribonuclease"/>
</dbReference>
<dbReference type="InterPro" id="IPR016494">
    <property type="entry name" value="5_3_exoribonuclease_1"/>
</dbReference>
<dbReference type="InterPro" id="IPR014722">
    <property type="entry name" value="Rib_uL2_dom2"/>
</dbReference>
<dbReference type="InterPro" id="IPR041385">
    <property type="entry name" value="SH3_12"/>
</dbReference>
<dbReference type="InterPro" id="IPR040992">
    <property type="entry name" value="XRN1_D1"/>
</dbReference>
<dbReference type="InterPro" id="IPR047007">
    <property type="entry name" value="XRN1_D1_sf"/>
</dbReference>
<dbReference type="InterPro" id="IPR041106">
    <property type="entry name" value="XRN1_D2_D3"/>
</dbReference>
<dbReference type="InterPro" id="IPR041412">
    <property type="entry name" value="Xrn1_helical"/>
</dbReference>
<dbReference type="InterPro" id="IPR004859">
    <property type="entry name" value="Xrn1_N"/>
</dbReference>
<dbReference type="InterPro" id="IPR047008">
    <property type="entry name" value="XRN1_SH3_sf"/>
</dbReference>
<dbReference type="PANTHER" id="PTHR12341:SF7">
    <property type="entry name" value="5'-3' EXORIBONUCLEASE 1"/>
    <property type="match status" value="1"/>
</dbReference>
<dbReference type="PANTHER" id="PTHR12341">
    <property type="entry name" value="5'-&gt;3' EXORIBONUCLEASE"/>
    <property type="match status" value="1"/>
</dbReference>
<dbReference type="Pfam" id="PF18129">
    <property type="entry name" value="SH3_12"/>
    <property type="match status" value="1"/>
</dbReference>
<dbReference type="Pfam" id="PF18332">
    <property type="entry name" value="XRN1_D1"/>
    <property type="match status" value="1"/>
</dbReference>
<dbReference type="Pfam" id="PF18334">
    <property type="entry name" value="XRN1_D2_D3"/>
    <property type="match status" value="1"/>
</dbReference>
<dbReference type="Pfam" id="PF17846">
    <property type="entry name" value="XRN_M"/>
    <property type="match status" value="1"/>
</dbReference>
<dbReference type="Pfam" id="PF03159">
    <property type="entry name" value="XRN_N"/>
    <property type="match status" value="1"/>
</dbReference>
<dbReference type="PIRSF" id="PIRSF006743">
    <property type="entry name" value="Exonuclease_Xnr1"/>
    <property type="match status" value="1"/>
</dbReference>
<reference key="1">
    <citation type="journal article" date="1996" name="Curr. Genet.">
        <title>Requirement of S. pombe exonuclease II, a homologue of S. cerevisiae Sep1, for normal mitotic growth and viability.</title>
        <authorList>
            <person name="Szankasi P."/>
            <person name="Smith G.R."/>
        </authorList>
    </citation>
    <scope>NUCLEOTIDE SEQUENCE [GENOMIC DNA]</scope>
    <scope>PROTEIN SEQUENCE OF 47-71; 620-636 AND 666-674</scope>
    <source>
        <strain>972 / ATCC 24843</strain>
    </source>
</reference>
<reference key="2">
    <citation type="journal article" date="2002" name="Nature">
        <title>The genome sequence of Schizosaccharomyces pombe.</title>
        <authorList>
            <person name="Wood V."/>
            <person name="Gwilliam R."/>
            <person name="Rajandream M.A."/>
            <person name="Lyne M.H."/>
            <person name="Lyne R."/>
            <person name="Stewart A."/>
            <person name="Sgouros J.G."/>
            <person name="Peat N."/>
            <person name="Hayles J."/>
            <person name="Baker S.G."/>
            <person name="Basham D."/>
            <person name="Bowman S."/>
            <person name="Brooks K."/>
            <person name="Brown D."/>
            <person name="Brown S."/>
            <person name="Chillingworth T."/>
            <person name="Churcher C.M."/>
            <person name="Collins M."/>
            <person name="Connor R."/>
            <person name="Cronin A."/>
            <person name="Davis P."/>
            <person name="Feltwell T."/>
            <person name="Fraser A."/>
            <person name="Gentles S."/>
            <person name="Goble A."/>
            <person name="Hamlin N."/>
            <person name="Harris D.E."/>
            <person name="Hidalgo J."/>
            <person name="Hodgson G."/>
            <person name="Holroyd S."/>
            <person name="Hornsby T."/>
            <person name="Howarth S."/>
            <person name="Huckle E.J."/>
            <person name="Hunt S."/>
            <person name="Jagels K."/>
            <person name="James K.D."/>
            <person name="Jones L."/>
            <person name="Jones M."/>
            <person name="Leather S."/>
            <person name="McDonald S."/>
            <person name="McLean J."/>
            <person name="Mooney P."/>
            <person name="Moule S."/>
            <person name="Mungall K.L."/>
            <person name="Murphy L.D."/>
            <person name="Niblett D."/>
            <person name="Odell C."/>
            <person name="Oliver K."/>
            <person name="O'Neil S."/>
            <person name="Pearson D."/>
            <person name="Quail M.A."/>
            <person name="Rabbinowitsch E."/>
            <person name="Rutherford K.M."/>
            <person name="Rutter S."/>
            <person name="Saunders D."/>
            <person name="Seeger K."/>
            <person name="Sharp S."/>
            <person name="Skelton J."/>
            <person name="Simmonds M.N."/>
            <person name="Squares R."/>
            <person name="Squares S."/>
            <person name="Stevens K."/>
            <person name="Taylor K."/>
            <person name="Taylor R.G."/>
            <person name="Tivey A."/>
            <person name="Walsh S.V."/>
            <person name="Warren T."/>
            <person name="Whitehead S."/>
            <person name="Woodward J.R."/>
            <person name="Volckaert G."/>
            <person name="Aert R."/>
            <person name="Robben J."/>
            <person name="Grymonprez B."/>
            <person name="Weltjens I."/>
            <person name="Vanstreels E."/>
            <person name="Rieger M."/>
            <person name="Schaefer M."/>
            <person name="Mueller-Auer S."/>
            <person name="Gabel C."/>
            <person name="Fuchs M."/>
            <person name="Duesterhoeft A."/>
            <person name="Fritzc C."/>
            <person name="Holzer E."/>
            <person name="Moestl D."/>
            <person name="Hilbert H."/>
            <person name="Borzym K."/>
            <person name="Langer I."/>
            <person name="Beck A."/>
            <person name="Lehrach H."/>
            <person name="Reinhardt R."/>
            <person name="Pohl T.M."/>
            <person name="Eger P."/>
            <person name="Zimmermann W."/>
            <person name="Wedler H."/>
            <person name="Wambutt R."/>
            <person name="Purnelle B."/>
            <person name="Goffeau A."/>
            <person name="Cadieu E."/>
            <person name="Dreano S."/>
            <person name="Gloux S."/>
            <person name="Lelaure V."/>
            <person name="Mottier S."/>
            <person name="Galibert F."/>
            <person name="Aves S.J."/>
            <person name="Xiang Z."/>
            <person name="Hunt C."/>
            <person name="Moore K."/>
            <person name="Hurst S.M."/>
            <person name="Lucas M."/>
            <person name="Rochet M."/>
            <person name="Gaillardin C."/>
            <person name="Tallada V.A."/>
            <person name="Garzon A."/>
            <person name="Thode G."/>
            <person name="Daga R.R."/>
            <person name="Cruzado L."/>
            <person name="Jimenez J."/>
            <person name="Sanchez M."/>
            <person name="del Rey F."/>
            <person name="Benito J."/>
            <person name="Dominguez A."/>
            <person name="Revuelta J.L."/>
            <person name="Moreno S."/>
            <person name="Armstrong J."/>
            <person name="Forsburg S.L."/>
            <person name="Cerutti L."/>
            <person name="Lowe T."/>
            <person name="McCombie W.R."/>
            <person name="Paulsen I."/>
            <person name="Potashkin J."/>
            <person name="Shpakovski G.V."/>
            <person name="Ussery D."/>
            <person name="Barrell B.G."/>
            <person name="Nurse P."/>
        </authorList>
    </citation>
    <scope>NUCLEOTIDE SEQUENCE [LARGE SCALE GENOMIC DNA]</scope>
    <source>
        <strain>972 / ATCC 24843</strain>
    </source>
</reference>
<reference key="3">
    <citation type="journal article" date="1994" name="J. Biol. Chem.">
        <title>A multifunctional exonuclease from vegetative Schizosaccharomyces pombe cells exhibiting in vitro strand exchange activity.</title>
        <authorList>
            <person name="Kaeslin E."/>
            <person name="Heyer W.-D."/>
        </authorList>
    </citation>
    <scope>PROTEIN SEQUENCE OF 488-501</scope>
    <scope>FUNCTION</scope>
    <source>
        <strain>972 / ATCC 24843</strain>
    </source>
</reference>
<reference key="4">
    <citation type="journal article" date="1992" name="Biochemistry">
        <title>A single-stranded DNA exonuclease from Schizosaccharomyces pombe.</title>
        <authorList>
            <person name="Szankasi P."/>
            <person name="Smith G.R."/>
        </authorList>
    </citation>
    <scope>CHARACTERIZATION OF SINGLE-STRANDED DNA EXONUCLEASE ACTIVITY</scope>
    <scope>FUNCTION</scope>
    <scope>COFACTOR</scope>
</reference>
<reference key="5">
    <citation type="journal article" date="1994" name="J. Biol. Chem.">
        <title>Schizosaccharomyces pombe fatty acid synthase mediates DNA strand exchange in vitro.</title>
        <authorList>
            <person name="Kaeslin E."/>
            <person name="Heyer W.-D."/>
        </authorList>
    </citation>
    <scope>ACTIVITY REGULATION</scope>
</reference>
<reference key="6">
    <citation type="journal article" date="2006" name="Nat. Biotechnol.">
        <title>ORFeome cloning and global analysis of protein localization in the fission yeast Schizosaccharomyces pombe.</title>
        <authorList>
            <person name="Matsuyama A."/>
            <person name="Arai R."/>
            <person name="Yashiroda Y."/>
            <person name="Shirai A."/>
            <person name="Kamata A."/>
            <person name="Sekido S."/>
            <person name="Kobayashi Y."/>
            <person name="Hashimoto A."/>
            <person name="Hamamoto M."/>
            <person name="Hiraoka Y."/>
            <person name="Horinouchi S."/>
            <person name="Yoshida M."/>
        </authorList>
    </citation>
    <scope>SUBCELLULAR LOCATION [LARGE SCALE ANALYSIS]</scope>
</reference>
<accession>P40383</accession>
<name>XRN1_SCHPO</name>
<gene>
    <name type="primary">exo2</name>
    <name type="ORF">SPAC17A5.14</name>
</gene>
<protein>
    <recommendedName>
        <fullName>5'-3' exoribonuclease 1</fullName>
        <ecNumber>3.1.13.-</ecNumber>
    </recommendedName>
    <alternativeName>
        <fullName>Exonuclease 2</fullName>
    </alternativeName>
    <alternativeName>
        <fullName>Exonuclease II</fullName>
        <shortName>Exo II</shortName>
    </alternativeName>
    <alternativeName>
        <fullName>p140</fullName>
    </alternativeName>
</protein>